<feature type="chain" id="PRO_0000431551" description="Dynein axonemal assembly factor 6">
    <location>
        <begin position="1"/>
        <end position="218"/>
    </location>
</feature>
<feature type="region of interest" description="Disordered" evidence="2">
    <location>
        <begin position="66"/>
        <end position="103"/>
    </location>
</feature>
<feature type="compositionally biased region" description="Basic and acidic residues" evidence="2">
    <location>
        <begin position="75"/>
        <end position="89"/>
    </location>
</feature>
<name>DAAF6_MOUSE</name>
<reference key="1">
    <citation type="journal article" date="2009" name="PLoS Biol.">
        <title>Lineage-specific biology revealed by a finished genome assembly of the mouse.</title>
        <authorList>
            <person name="Church D.M."/>
            <person name="Goodstadt L."/>
            <person name="Hillier L.W."/>
            <person name="Zody M.C."/>
            <person name="Goldstein S."/>
            <person name="She X."/>
            <person name="Bult C.J."/>
            <person name="Agarwala R."/>
            <person name="Cherry J.L."/>
            <person name="DiCuccio M."/>
            <person name="Hlavina W."/>
            <person name="Kapustin Y."/>
            <person name="Meric P."/>
            <person name="Maglott D."/>
            <person name="Birtle Z."/>
            <person name="Marques A.C."/>
            <person name="Graves T."/>
            <person name="Zhou S."/>
            <person name="Teague B."/>
            <person name="Potamousis K."/>
            <person name="Churas C."/>
            <person name="Place M."/>
            <person name="Herschleb J."/>
            <person name="Runnheim R."/>
            <person name="Forrest D."/>
            <person name="Amos-Landgraf J."/>
            <person name="Schwartz D.C."/>
            <person name="Cheng Z."/>
            <person name="Lindblad-Toh K."/>
            <person name="Eichler E.E."/>
            <person name="Ponting C.P."/>
        </authorList>
    </citation>
    <scope>NUCLEOTIDE SEQUENCE [LARGE SCALE GENOMIC DNA]</scope>
    <source>
        <strain>C57BL/6J</strain>
    </source>
</reference>
<reference key="2">
    <citation type="submission" date="2005-07" db="EMBL/GenBank/DDBJ databases">
        <authorList>
            <person name="Mural R.J."/>
            <person name="Adams M.D."/>
            <person name="Myers E.W."/>
            <person name="Smith H.O."/>
            <person name="Venter J.C."/>
        </authorList>
    </citation>
    <scope>NUCLEOTIDE SEQUENCE [LARGE SCALE GENOMIC DNA]</scope>
</reference>
<reference key="3">
    <citation type="journal article" date="2004" name="Genome Res.">
        <title>The status, quality, and expansion of the NIH full-length cDNA project: the Mammalian Gene Collection (MGC).</title>
        <authorList>
            <consortium name="The MGC Project Team"/>
        </authorList>
    </citation>
    <scope>NUCLEOTIDE SEQUENCE [LARGE SCALE MRNA]</scope>
</reference>
<reference key="4">
    <citation type="journal article" date="2010" name="Cell">
        <title>A tissue-specific atlas of mouse protein phosphorylation and expression.</title>
        <authorList>
            <person name="Huttlin E.L."/>
            <person name="Jedrychowski M.P."/>
            <person name="Elias J.E."/>
            <person name="Goswami T."/>
            <person name="Rad R."/>
            <person name="Beausoleil S.A."/>
            <person name="Villen J."/>
            <person name="Haas W."/>
            <person name="Sowa M.E."/>
            <person name="Gygi S.P."/>
        </authorList>
    </citation>
    <scope>IDENTIFICATION BY MASS SPECTROMETRY [LARGE SCALE ANALYSIS]</scope>
    <source>
        <tissue>Testis</tissue>
    </source>
</reference>
<reference key="5">
    <citation type="journal article" date="2014" name="J. Cell Biol.">
        <title>Pih1d3 is required for cytoplasmic preassembly of axonemal dynein in mouse sperm.</title>
        <authorList>
            <person name="Dong F."/>
            <person name="Shinohara K."/>
            <person name="Botilde Y."/>
            <person name="Nabeshima R."/>
            <person name="Asai Y."/>
            <person name="Fukumoto A."/>
            <person name="Hasegawa T."/>
            <person name="Matsuo M."/>
            <person name="Takeda H."/>
            <person name="Shiratori H."/>
            <person name="Nakamura T."/>
            <person name="Hamada H."/>
        </authorList>
    </citation>
    <scope>DISRUPTION PHENOTYPE</scope>
    <scope>SUBCELLULAR LOCATION</scope>
    <scope>TISSUE SPECIFICITY</scope>
    <scope>FUNCTION</scope>
    <scope>INTERACTION WITH HSPA1A/B; HSP90AA1 AND WITH DNAI2</scope>
</reference>
<dbReference type="EMBL" id="AC121888">
    <property type="status" value="NOT_ANNOTATED_CDS"/>
    <property type="molecule type" value="Genomic_DNA"/>
</dbReference>
<dbReference type="EMBL" id="CH466536">
    <property type="protein sequence ID" value="EDL14429.1"/>
    <property type="molecule type" value="Genomic_DNA"/>
</dbReference>
<dbReference type="EMBL" id="BC107262">
    <property type="protein sequence ID" value="AAI07263.1"/>
    <property type="molecule type" value="mRNA"/>
</dbReference>
<dbReference type="CCDS" id="CCDS35531.1"/>
<dbReference type="RefSeq" id="NP_083338.1">
    <property type="nucleotide sequence ID" value="NM_029062.2"/>
</dbReference>
<dbReference type="SMR" id="Q3KNI6"/>
<dbReference type="FunCoup" id="Q3KNI6">
    <property type="interactions" value="178"/>
</dbReference>
<dbReference type="STRING" id="10090.ENSMUSP00000127665"/>
<dbReference type="iPTMnet" id="Q3KNI6"/>
<dbReference type="PhosphoSitePlus" id="Q3KNI6"/>
<dbReference type="SwissPalm" id="Q3KNI6"/>
<dbReference type="PaxDb" id="10090-ENSMUSP00000127665"/>
<dbReference type="ProteomicsDB" id="289895"/>
<dbReference type="Ensembl" id="ENSMUST00000027230.3">
    <property type="protein sequence ID" value="ENSMUSP00000127665.2"/>
    <property type="gene ID" value="ENSMUSG00000026063.5"/>
</dbReference>
<dbReference type="GeneID" id="74708"/>
<dbReference type="KEGG" id="mmu:74708"/>
<dbReference type="UCSC" id="uc007anm.1">
    <property type="organism name" value="mouse"/>
</dbReference>
<dbReference type="AGR" id="MGI:1921958"/>
<dbReference type="CTD" id="74708"/>
<dbReference type="MGI" id="MGI:1921958">
    <property type="gene designation" value="Dnaaf6"/>
</dbReference>
<dbReference type="VEuPathDB" id="HostDB:ENSMUSG00000026063"/>
<dbReference type="eggNOG" id="ENOG502RZWX">
    <property type="taxonomic scope" value="Eukaryota"/>
</dbReference>
<dbReference type="GeneTree" id="ENSGT00390000015219"/>
<dbReference type="HOGENOM" id="CLU_106090_1_0_1"/>
<dbReference type="InParanoid" id="Q3KNI6"/>
<dbReference type="OMA" id="AGDDIWH"/>
<dbReference type="OrthoDB" id="25887at2759"/>
<dbReference type="PhylomeDB" id="Q3KNI6"/>
<dbReference type="TreeFam" id="TF325677"/>
<dbReference type="BioGRID-ORCS" id="74708">
    <property type="hits" value="1 hit in 79 CRISPR screens"/>
</dbReference>
<dbReference type="PRO" id="PR:Q3KNI6"/>
<dbReference type="Proteomes" id="UP000000589">
    <property type="component" value="Chromosome 1"/>
</dbReference>
<dbReference type="RNAct" id="Q3KNI6">
    <property type="molecule type" value="protein"/>
</dbReference>
<dbReference type="Bgee" id="ENSMUSG00000026063">
    <property type="expression patterns" value="Expressed in spermatocyte and 4 other cell types or tissues"/>
</dbReference>
<dbReference type="GO" id="GO:0005737">
    <property type="term" value="C:cytoplasm"/>
    <property type="evidence" value="ECO:0000314"/>
    <property type="project" value="MGI"/>
</dbReference>
<dbReference type="GO" id="GO:0005802">
    <property type="term" value="C:trans-Golgi network"/>
    <property type="evidence" value="ECO:0000250"/>
    <property type="project" value="UniProtKB"/>
</dbReference>
<dbReference type="GO" id="GO:0045505">
    <property type="term" value="F:dynein intermediate chain binding"/>
    <property type="evidence" value="ECO:0000250"/>
    <property type="project" value="UniProtKB"/>
</dbReference>
<dbReference type="GO" id="GO:0051087">
    <property type="term" value="F:protein-folding chaperone binding"/>
    <property type="evidence" value="ECO:0000314"/>
    <property type="project" value="MGI"/>
</dbReference>
<dbReference type="GO" id="GO:0070286">
    <property type="term" value="P:axonemal dynein complex assembly"/>
    <property type="evidence" value="ECO:0000315"/>
    <property type="project" value="MGI"/>
</dbReference>
<dbReference type="GO" id="GO:0003341">
    <property type="term" value="P:cilium movement"/>
    <property type="evidence" value="ECO:0000250"/>
    <property type="project" value="UniProtKB"/>
</dbReference>
<dbReference type="GO" id="GO:0030317">
    <property type="term" value="P:flagellated sperm motility"/>
    <property type="evidence" value="ECO:0000315"/>
    <property type="project" value="MGI"/>
</dbReference>
<dbReference type="GO" id="GO:0036159">
    <property type="term" value="P:inner dynein arm assembly"/>
    <property type="evidence" value="ECO:0000250"/>
    <property type="project" value="UniProtKB"/>
</dbReference>
<dbReference type="GO" id="GO:0036158">
    <property type="term" value="P:outer dynein arm assembly"/>
    <property type="evidence" value="ECO:0000250"/>
    <property type="project" value="UniProtKB"/>
</dbReference>
<dbReference type="InterPro" id="IPR026697">
    <property type="entry name" value="DNAAF6"/>
</dbReference>
<dbReference type="InterPro" id="IPR041442">
    <property type="entry name" value="PIH1D1/2/3_CS-like"/>
</dbReference>
<dbReference type="PANTHER" id="PTHR21083:SF0">
    <property type="entry name" value="DYNEIN AXONEMAL ASSEMBLY FACTOR 6"/>
    <property type="match status" value="1"/>
</dbReference>
<dbReference type="PANTHER" id="PTHR21083">
    <property type="entry name" value="TWISTER"/>
    <property type="match status" value="1"/>
</dbReference>
<dbReference type="Pfam" id="PF18201">
    <property type="entry name" value="PIH1_CS"/>
    <property type="match status" value="1"/>
</dbReference>
<protein>
    <recommendedName>
        <fullName evidence="1">Dynein axonemal assembly factor 6</fullName>
    </recommendedName>
    <alternativeName>
        <fullName evidence="5">PIH1 domain-containing protein 3</fullName>
    </alternativeName>
</protein>
<accession>Q3KNI6</accession>
<gene>
    <name evidence="7" type="primary">Dnaaf6</name>
    <name evidence="4" type="synonym">Pih1d3</name>
</gene>
<organism evidence="6">
    <name type="scientific">Mus musculus</name>
    <name type="common">Mouse</name>
    <dbReference type="NCBI Taxonomy" id="10090"/>
    <lineage>
        <taxon>Eukaryota</taxon>
        <taxon>Metazoa</taxon>
        <taxon>Chordata</taxon>
        <taxon>Craniata</taxon>
        <taxon>Vertebrata</taxon>
        <taxon>Euteleostomi</taxon>
        <taxon>Mammalia</taxon>
        <taxon>Eutheria</taxon>
        <taxon>Euarchontoglires</taxon>
        <taxon>Glires</taxon>
        <taxon>Rodentia</taxon>
        <taxon>Myomorpha</taxon>
        <taxon>Muroidea</taxon>
        <taxon>Muridae</taxon>
        <taxon>Murinae</taxon>
        <taxon>Mus</taxon>
        <taxon>Mus</taxon>
    </lineage>
</organism>
<comment type="function">
    <text evidence="3">Plays a role in cytoplasmic pre-assembly of axonemal dynein.</text>
</comment>
<comment type="subunit">
    <text evidence="1 3">Interacts with HSPA1A/B, HSP90AA1 and DNAI2 (PubMed:24421334). Interacts with DNAAF2 and DNAAF4 (By similarity).</text>
</comment>
<comment type="subcellular location">
    <subcellularLocation>
        <location evidence="3">Cytoplasm</location>
    </subcellularLocation>
    <subcellularLocation>
        <location evidence="1">Golgi apparatus</location>
        <location evidence="1">trans-Golgi network</location>
    </subcellularLocation>
    <text evidence="3">Localized to the cytoplasm of spermatogenic cells.</text>
</comment>
<comment type="tissue specificity">
    <text evidence="3">Specifically expressed in testis. Detected in pachytene spermatocytes from 5 weeks of age and in pachytene and diplotene spermatocytes of adult mice. Not detected in spermatids or mature sperm.</text>
</comment>
<comment type="disruption phenotype">
    <text evidence="3">Deficient mice develop normally but manifest male sterility. Sperm are immotile and fragile with the axoneme of the flagellum lacking outer dynein arms (ODAs) and inner dynein arms (IDAs) and showing a disturbed microtubules organization.</text>
</comment>
<comment type="similarity">
    <text evidence="5">Belongs to the PIH1 family.</text>
</comment>
<keyword id="KW-0963">Cytoplasm</keyword>
<keyword id="KW-0333">Golgi apparatus</keyword>
<keyword id="KW-1185">Reference proteome</keyword>
<sequence length="218" mass="24501">MESENAEAENVVTGNLEAKSKEGKNMQFVTLSSAWSLQALSSLLNPEEEDGFDFEQGQCSFTIGAMGPGNIGPPKAKESKAIPEPRSDESENIWNPEEVPEGAEHDDIWDVREIPDYEIVFQQTVGTEDVYLGLTRKDPSTACCQELVVKIKLPNTNPSEIQIDIQEMLLDLRTPRKKLLVNFPQPVERNSARASYIWEAETLEVRMTVQRDLDFNIS</sequence>
<evidence type="ECO:0000250" key="1">
    <source>
        <dbReference type="UniProtKB" id="Q9NQM4"/>
    </source>
</evidence>
<evidence type="ECO:0000256" key="2">
    <source>
        <dbReference type="SAM" id="MobiDB-lite"/>
    </source>
</evidence>
<evidence type="ECO:0000269" key="3">
    <source>
    </source>
</evidence>
<evidence type="ECO:0000303" key="4">
    <source>
    </source>
</evidence>
<evidence type="ECO:0000305" key="5"/>
<evidence type="ECO:0000312" key="6">
    <source>
        <dbReference type="EMBL" id="AAI07263.1"/>
    </source>
</evidence>
<evidence type="ECO:0000312" key="7">
    <source>
        <dbReference type="MGI" id="MGI:1921958"/>
    </source>
</evidence>
<proteinExistence type="evidence at protein level"/>